<accession>A8GMA3</accession>
<organism>
    <name type="scientific">Rickettsia akari (strain Hartford)</name>
    <dbReference type="NCBI Taxonomy" id="293614"/>
    <lineage>
        <taxon>Bacteria</taxon>
        <taxon>Pseudomonadati</taxon>
        <taxon>Pseudomonadota</taxon>
        <taxon>Alphaproteobacteria</taxon>
        <taxon>Rickettsiales</taxon>
        <taxon>Rickettsiaceae</taxon>
        <taxon>Rickettsieae</taxon>
        <taxon>Rickettsia</taxon>
        <taxon>spotted fever group</taxon>
    </lineage>
</organism>
<comment type="function">
    <text evidence="1">Forms part of the ribosomal stalk which helps the ribosome interact with GTP-bound translation factors.</text>
</comment>
<comment type="subunit">
    <text evidence="1">Part of the ribosomal stalk of the 50S ribosomal subunit. Interacts with L10 and the large rRNA to form the base of the stalk. L10 forms an elongated spine to which L12 dimers bind in a sequential fashion forming a multimeric L10(L12)X complex.</text>
</comment>
<comment type="PTM">
    <text evidence="1">One or more lysine residues are methylated.</text>
</comment>
<comment type="similarity">
    <text evidence="1">Belongs to the universal ribosomal protein uL11 family.</text>
</comment>
<sequence>MSQKAIKGYINLIIPAGGATPAPPIGPALGQRKVNIKTFCDEFNNSTKDMDKGVPLPTLITVYEDSSFSFKIKTPPASYFLKKYAKITKGSSATKKEAVVGKVTMDDCREIAKLKMPDLNTKDIEAATKIICGSAASMGLEVVGN</sequence>
<proteinExistence type="inferred from homology"/>
<dbReference type="EMBL" id="CP000847">
    <property type="protein sequence ID" value="ABV74528.1"/>
    <property type="molecule type" value="Genomic_DNA"/>
</dbReference>
<dbReference type="RefSeq" id="WP_012013398.1">
    <property type="nucleotide sequence ID" value="NC_009881.1"/>
</dbReference>
<dbReference type="SMR" id="A8GMA3"/>
<dbReference type="STRING" id="293614.A1C_00990"/>
<dbReference type="KEGG" id="rak:A1C_00990"/>
<dbReference type="eggNOG" id="COG0080">
    <property type="taxonomic scope" value="Bacteria"/>
</dbReference>
<dbReference type="HOGENOM" id="CLU_074237_2_0_5"/>
<dbReference type="Proteomes" id="UP000006830">
    <property type="component" value="Chromosome"/>
</dbReference>
<dbReference type="GO" id="GO:0022625">
    <property type="term" value="C:cytosolic large ribosomal subunit"/>
    <property type="evidence" value="ECO:0007669"/>
    <property type="project" value="TreeGrafter"/>
</dbReference>
<dbReference type="GO" id="GO:0070180">
    <property type="term" value="F:large ribosomal subunit rRNA binding"/>
    <property type="evidence" value="ECO:0007669"/>
    <property type="project" value="UniProtKB-UniRule"/>
</dbReference>
<dbReference type="GO" id="GO:0003735">
    <property type="term" value="F:structural constituent of ribosome"/>
    <property type="evidence" value="ECO:0007669"/>
    <property type="project" value="InterPro"/>
</dbReference>
<dbReference type="GO" id="GO:0006412">
    <property type="term" value="P:translation"/>
    <property type="evidence" value="ECO:0007669"/>
    <property type="project" value="UniProtKB-UniRule"/>
</dbReference>
<dbReference type="CDD" id="cd00349">
    <property type="entry name" value="Ribosomal_L11"/>
    <property type="match status" value="1"/>
</dbReference>
<dbReference type="FunFam" id="1.10.10.250:FF:000001">
    <property type="entry name" value="50S ribosomal protein L11"/>
    <property type="match status" value="1"/>
</dbReference>
<dbReference type="Gene3D" id="1.10.10.250">
    <property type="entry name" value="Ribosomal protein L11, C-terminal domain"/>
    <property type="match status" value="1"/>
</dbReference>
<dbReference type="Gene3D" id="3.30.1550.10">
    <property type="entry name" value="Ribosomal protein L11/L12, N-terminal domain"/>
    <property type="match status" value="1"/>
</dbReference>
<dbReference type="HAMAP" id="MF_00736">
    <property type="entry name" value="Ribosomal_uL11"/>
    <property type="match status" value="1"/>
</dbReference>
<dbReference type="InterPro" id="IPR000911">
    <property type="entry name" value="Ribosomal_uL11"/>
</dbReference>
<dbReference type="InterPro" id="IPR006519">
    <property type="entry name" value="Ribosomal_uL11_bac-typ"/>
</dbReference>
<dbReference type="InterPro" id="IPR020783">
    <property type="entry name" value="Ribosomal_uL11_C"/>
</dbReference>
<dbReference type="InterPro" id="IPR036769">
    <property type="entry name" value="Ribosomal_uL11_C_sf"/>
</dbReference>
<dbReference type="InterPro" id="IPR020785">
    <property type="entry name" value="Ribosomal_uL11_CS"/>
</dbReference>
<dbReference type="InterPro" id="IPR020784">
    <property type="entry name" value="Ribosomal_uL11_N"/>
</dbReference>
<dbReference type="InterPro" id="IPR036796">
    <property type="entry name" value="Ribosomal_uL11_N_sf"/>
</dbReference>
<dbReference type="NCBIfam" id="TIGR01632">
    <property type="entry name" value="L11_bact"/>
    <property type="match status" value="1"/>
</dbReference>
<dbReference type="PANTHER" id="PTHR11661">
    <property type="entry name" value="60S RIBOSOMAL PROTEIN L12"/>
    <property type="match status" value="1"/>
</dbReference>
<dbReference type="PANTHER" id="PTHR11661:SF1">
    <property type="entry name" value="LARGE RIBOSOMAL SUBUNIT PROTEIN UL11M"/>
    <property type="match status" value="1"/>
</dbReference>
<dbReference type="Pfam" id="PF00298">
    <property type="entry name" value="Ribosomal_L11"/>
    <property type="match status" value="1"/>
</dbReference>
<dbReference type="Pfam" id="PF03946">
    <property type="entry name" value="Ribosomal_L11_N"/>
    <property type="match status" value="1"/>
</dbReference>
<dbReference type="SMART" id="SM00649">
    <property type="entry name" value="RL11"/>
    <property type="match status" value="1"/>
</dbReference>
<dbReference type="SUPFAM" id="SSF54747">
    <property type="entry name" value="Ribosomal L11/L12e N-terminal domain"/>
    <property type="match status" value="1"/>
</dbReference>
<dbReference type="SUPFAM" id="SSF46906">
    <property type="entry name" value="Ribosomal protein L11, C-terminal domain"/>
    <property type="match status" value="1"/>
</dbReference>
<dbReference type="PROSITE" id="PS00359">
    <property type="entry name" value="RIBOSOMAL_L11"/>
    <property type="match status" value="1"/>
</dbReference>
<protein>
    <recommendedName>
        <fullName evidence="1">Large ribosomal subunit protein uL11</fullName>
    </recommendedName>
    <alternativeName>
        <fullName evidence="2">50S ribosomal protein L11</fullName>
    </alternativeName>
</protein>
<feature type="chain" id="PRO_1000046252" description="Large ribosomal subunit protein uL11">
    <location>
        <begin position="1"/>
        <end position="145"/>
    </location>
</feature>
<evidence type="ECO:0000255" key="1">
    <source>
        <dbReference type="HAMAP-Rule" id="MF_00736"/>
    </source>
</evidence>
<evidence type="ECO:0000305" key="2"/>
<gene>
    <name evidence="1" type="primary">rplK</name>
    <name type="ordered locus">A1C_00990</name>
</gene>
<keyword id="KW-0488">Methylation</keyword>
<keyword id="KW-0687">Ribonucleoprotein</keyword>
<keyword id="KW-0689">Ribosomal protein</keyword>
<keyword id="KW-0694">RNA-binding</keyword>
<keyword id="KW-0699">rRNA-binding</keyword>
<name>RL11_RICAH</name>
<reference key="1">
    <citation type="submission" date="2007-09" db="EMBL/GenBank/DDBJ databases">
        <title>Complete genome sequence of Rickettsia akari.</title>
        <authorList>
            <person name="Madan A."/>
            <person name="Fahey J."/>
            <person name="Helton E."/>
            <person name="Ketteman M."/>
            <person name="Madan A."/>
            <person name="Rodrigues S."/>
            <person name="Sanchez A."/>
            <person name="Whiting M."/>
            <person name="Dasch G."/>
            <person name="Eremeeva M."/>
        </authorList>
    </citation>
    <scope>NUCLEOTIDE SEQUENCE [LARGE SCALE GENOMIC DNA]</scope>
    <source>
        <strain>Hartford</strain>
    </source>
</reference>